<organism>
    <name type="scientific">Escherichia coli (strain K12)</name>
    <dbReference type="NCBI Taxonomy" id="83333"/>
    <lineage>
        <taxon>Bacteria</taxon>
        <taxon>Pseudomonadati</taxon>
        <taxon>Pseudomonadota</taxon>
        <taxon>Gammaproteobacteria</taxon>
        <taxon>Enterobacterales</taxon>
        <taxon>Enterobacteriaceae</taxon>
        <taxon>Escherichia</taxon>
    </lineage>
</organism>
<protein>
    <recommendedName>
        <fullName>Uncharacterized protein YijF</fullName>
    </recommendedName>
</protein>
<name>YIJF_ECOLI</name>
<accession>P32668</accession>
<accession>Q2M8P0</accession>
<dbReference type="EMBL" id="U00006">
    <property type="protein sequence ID" value="AAC43050.1"/>
    <property type="molecule type" value="Genomic_DNA"/>
</dbReference>
<dbReference type="EMBL" id="U00096">
    <property type="protein sequence ID" value="AAC76926.1"/>
    <property type="molecule type" value="Genomic_DNA"/>
</dbReference>
<dbReference type="EMBL" id="AP009048">
    <property type="protein sequence ID" value="BAE77366.1"/>
    <property type="molecule type" value="Genomic_DNA"/>
</dbReference>
<dbReference type="PIR" id="I78665">
    <property type="entry name" value="I78665"/>
</dbReference>
<dbReference type="RefSeq" id="NP_418379.1">
    <property type="nucleotide sequence ID" value="NC_000913.3"/>
</dbReference>
<dbReference type="RefSeq" id="WP_000647891.1">
    <property type="nucleotide sequence ID" value="NZ_LN832404.1"/>
</dbReference>
<dbReference type="BioGRID" id="4262652">
    <property type="interactions" value="11"/>
</dbReference>
<dbReference type="FunCoup" id="P32668">
    <property type="interactions" value="130"/>
</dbReference>
<dbReference type="STRING" id="511145.b3944"/>
<dbReference type="PaxDb" id="511145-b3944"/>
<dbReference type="EnsemblBacteria" id="AAC76926">
    <property type="protein sequence ID" value="AAC76926"/>
    <property type="gene ID" value="b3944"/>
</dbReference>
<dbReference type="GeneID" id="948441"/>
<dbReference type="KEGG" id="ecj:JW3916"/>
<dbReference type="KEGG" id="eco:b3944"/>
<dbReference type="KEGG" id="ecoc:C3026_21315"/>
<dbReference type="PATRIC" id="fig|511145.12.peg.4065"/>
<dbReference type="EchoBASE" id="EB1848"/>
<dbReference type="eggNOG" id="COG3738">
    <property type="taxonomic scope" value="Bacteria"/>
</dbReference>
<dbReference type="HOGENOM" id="CLU_079833_2_0_6"/>
<dbReference type="InParanoid" id="P32668"/>
<dbReference type="OMA" id="ITGHYRY"/>
<dbReference type="OrthoDB" id="114026at2"/>
<dbReference type="PhylomeDB" id="P32668"/>
<dbReference type="BioCyc" id="EcoCyc:EG11903-MONOMER"/>
<dbReference type="PRO" id="PR:P32668"/>
<dbReference type="Proteomes" id="UP000000625">
    <property type="component" value="Chromosome"/>
</dbReference>
<dbReference type="InterPro" id="IPR009706">
    <property type="entry name" value="DUF1287"/>
</dbReference>
<dbReference type="Pfam" id="PF06940">
    <property type="entry name" value="DUF1287"/>
    <property type="match status" value="1"/>
</dbReference>
<dbReference type="PIRSF" id="PIRSF011444">
    <property type="entry name" value="DUF1287"/>
    <property type="match status" value="1"/>
</dbReference>
<keyword id="KW-1185">Reference proteome</keyword>
<keyword id="KW-0732">Signal</keyword>
<evidence type="ECO:0000255" key="1"/>
<feature type="signal peptide" evidence="1">
    <location>
        <begin position="1"/>
        <end position="18"/>
    </location>
</feature>
<feature type="chain" id="PRO_0000013936" description="Uncharacterized protein YijF">
    <location>
        <begin position="19"/>
        <end position="205"/>
    </location>
</feature>
<gene>
    <name type="primary">yijF</name>
    <name type="ordered locus">b3944</name>
    <name type="ordered locus">JW3916</name>
</gene>
<reference key="1">
    <citation type="journal article" date="1993" name="Nucleic Acids Res.">
        <title>Analysis of the Escherichia coli genome. IV. DNA sequence of the region from 89.2 to 92.8 minutes.</title>
        <authorList>
            <person name="Blattner F.R."/>
            <person name="Burland V.D."/>
            <person name="Plunkett G. III"/>
            <person name="Sofia H.J."/>
            <person name="Daniels D.L."/>
        </authorList>
    </citation>
    <scope>NUCLEOTIDE SEQUENCE [LARGE SCALE GENOMIC DNA]</scope>
    <source>
        <strain>K12 / MG1655 / ATCC 47076</strain>
    </source>
</reference>
<reference key="2">
    <citation type="journal article" date="1997" name="Science">
        <title>The complete genome sequence of Escherichia coli K-12.</title>
        <authorList>
            <person name="Blattner F.R."/>
            <person name="Plunkett G. III"/>
            <person name="Bloch C.A."/>
            <person name="Perna N.T."/>
            <person name="Burland V."/>
            <person name="Riley M."/>
            <person name="Collado-Vides J."/>
            <person name="Glasner J.D."/>
            <person name="Rode C.K."/>
            <person name="Mayhew G.F."/>
            <person name="Gregor J."/>
            <person name="Davis N.W."/>
            <person name="Kirkpatrick H.A."/>
            <person name="Goeden M.A."/>
            <person name="Rose D.J."/>
            <person name="Mau B."/>
            <person name="Shao Y."/>
        </authorList>
    </citation>
    <scope>NUCLEOTIDE SEQUENCE [LARGE SCALE GENOMIC DNA]</scope>
    <source>
        <strain>K12 / MG1655 / ATCC 47076</strain>
    </source>
</reference>
<reference key="3">
    <citation type="journal article" date="2006" name="Mol. Syst. Biol.">
        <title>Highly accurate genome sequences of Escherichia coli K-12 strains MG1655 and W3110.</title>
        <authorList>
            <person name="Hayashi K."/>
            <person name="Morooka N."/>
            <person name="Yamamoto Y."/>
            <person name="Fujita K."/>
            <person name="Isono K."/>
            <person name="Choi S."/>
            <person name="Ohtsubo E."/>
            <person name="Baba T."/>
            <person name="Wanner B.L."/>
            <person name="Mori H."/>
            <person name="Horiuchi T."/>
        </authorList>
    </citation>
    <scope>NUCLEOTIDE SEQUENCE [LARGE SCALE GENOMIC DNA]</scope>
    <source>
        <strain>K12 / W3110 / ATCC 27325 / DSM 5911</strain>
    </source>
</reference>
<proteinExistence type="inferred from homology"/>
<sequence length="205" mass="22955">MKASLALLSLLTAFTSHSLKSPAVPPTVVQIQANTNLAIADGARQQIGSTLFYDPAYVQLTYPGGDVPQERGVCSDVVIRALRSQKVDLQKLVHEDMAKNFAEYPQKWKLKRPDSNIDHRRVPNLETWFSRHDKTRPTSKNPSDYQAGDIVSWRLDNGLAHIGVVSDGFARDGTPLVIHNIGAGAQEEDVLFNWRMVGHYRYFVK</sequence>